<keyword id="KW-0333">Golgi apparatus</keyword>
<keyword id="KW-0444">Lipid biosynthesis</keyword>
<keyword id="KW-0443">Lipid metabolism</keyword>
<keyword id="KW-0472">Membrane</keyword>
<keyword id="KW-0611">Plant defense</keyword>
<keyword id="KW-1185">Reference proteome</keyword>
<keyword id="KW-0746">Sphingolipid metabolism</keyword>
<keyword id="KW-0808">Transferase</keyword>
<keyword id="KW-0812">Transmembrane</keyword>
<keyword id="KW-1133">Transmembrane helix</keyword>
<sequence length="305" mass="34996">MTLYIRRESSKLWKRFCSEISTEIGLLAENWKYLLAGLICQYIHGLAAKGVHYIHRPGPTLQDLGFFLLPELGQERSYISETVFTSVFLSFFLWTFHPFILKTKKIYTVLIWCRVLAFLVACQFLRVITFYSTQLPGPNYHCREGSKVSRLPWPKSALEVLEINPHGVMYGCGDLIFSSHMIFTLVFVRTYQKYGTKRFIKLFGWLTAIVQSLLIIASRKHYSVDVVVAWYTVNLVVFCLDKKLPELPDRTAVLLPVISKDRTKEENHKLLNGNGVDPADWRPRAQVNGKIDSNGVHTDNTMNGA</sequence>
<organism>
    <name type="scientific">Arabidopsis thaliana</name>
    <name type="common">Mouse-ear cress</name>
    <dbReference type="NCBI Taxonomy" id="3702"/>
    <lineage>
        <taxon>Eukaryota</taxon>
        <taxon>Viridiplantae</taxon>
        <taxon>Streptophyta</taxon>
        <taxon>Embryophyta</taxon>
        <taxon>Tracheophyta</taxon>
        <taxon>Spermatophyta</taxon>
        <taxon>Magnoliopsida</taxon>
        <taxon>eudicotyledons</taxon>
        <taxon>Gunneridae</taxon>
        <taxon>Pentapetalae</taxon>
        <taxon>rosids</taxon>
        <taxon>malvids</taxon>
        <taxon>Brassicales</taxon>
        <taxon>Brassicaceae</taxon>
        <taxon>Camelineae</taxon>
        <taxon>Arabidopsis</taxon>
    </lineage>
</organism>
<protein>
    <recommendedName>
        <fullName evidence="7">Phosphatidylinositol:ceramide inositolphosphotransferase 2</fullName>
        <ecNumber evidence="3">2.7.1.227</ecNumber>
    </recommendedName>
    <alternativeName>
        <fullName evidence="6">Inositol-phosphorylceramide synthase 2</fullName>
        <shortName evidence="6">AtIPCS2</shortName>
        <shortName evidence="6">IPC synthase 2</shortName>
    </alternativeName>
    <alternativeName>
        <fullName evidence="5">Protein ENHANCING RPW8-MEDIATED HR-LIKE CELL DEATH 1</fullName>
    </alternativeName>
    <alternativeName>
        <fullName evidence="7">Sphingolipid synthase 2</fullName>
    </alternativeName>
</protein>
<proteinExistence type="evidence at protein level"/>
<gene>
    <name evidence="6" type="primary">IPCS2</name>
    <name evidence="5" type="synonym">ERH1</name>
    <name evidence="8" type="ordered locus">At2g37940</name>
    <name evidence="7" type="ORF">T8P21.15</name>
</gene>
<name>IPCS2_ARATH</name>
<feature type="chain" id="PRO_0000419956" description="Phosphatidylinositol:ceramide inositolphosphotransferase 2">
    <location>
        <begin position="1"/>
        <end position="305"/>
    </location>
</feature>
<feature type="transmembrane region" description="Helical" evidence="2">
    <location>
        <begin position="34"/>
        <end position="54"/>
    </location>
</feature>
<feature type="transmembrane region" description="Helical" evidence="2">
    <location>
        <begin position="81"/>
        <end position="101"/>
    </location>
</feature>
<feature type="transmembrane region" description="Helical" evidence="2">
    <location>
        <begin position="105"/>
        <end position="125"/>
    </location>
</feature>
<feature type="transmembrane region" description="Helical" evidence="2">
    <location>
        <begin position="168"/>
        <end position="188"/>
    </location>
</feature>
<feature type="transmembrane region" description="Helical" evidence="2">
    <location>
        <begin position="198"/>
        <end position="218"/>
    </location>
</feature>
<feature type="transmembrane region" description="Helical" evidence="2">
    <location>
        <begin position="221"/>
        <end position="241"/>
    </location>
</feature>
<feature type="active site" evidence="1">
    <location>
        <position position="180"/>
    </location>
</feature>
<feature type="active site" evidence="1">
    <location>
        <position position="221"/>
    </location>
</feature>
<feature type="active site" evidence="1">
    <location>
        <position position="225"/>
    </location>
</feature>
<reference key="1">
    <citation type="journal article" date="1999" name="Nature">
        <title>Sequence and analysis of chromosome 2 of the plant Arabidopsis thaliana.</title>
        <authorList>
            <person name="Lin X."/>
            <person name="Kaul S."/>
            <person name="Rounsley S.D."/>
            <person name="Shea T.P."/>
            <person name="Benito M.-I."/>
            <person name="Town C.D."/>
            <person name="Fujii C.Y."/>
            <person name="Mason T.M."/>
            <person name="Bowman C.L."/>
            <person name="Barnstead M.E."/>
            <person name="Feldblyum T.V."/>
            <person name="Buell C.R."/>
            <person name="Ketchum K.A."/>
            <person name="Lee J.J."/>
            <person name="Ronning C.M."/>
            <person name="Koo H.L."/>
            <person name="Moffat K.S."/>
            <person name="Cronin L.A."/>
            <person name="Shen M."/>
            <person name="Pai G."/>
            <person name="Van Aken S."/>
            <person name="Umayam L."/>
            <person name="Tallon L.J."/>
            <person name="Gill J.E."/>
            <person name="Adams M.D."/>
            <person name="Carrera A.J."/>
            <person name="Creasy T.H."/>
            <person name="Goodman H.M."/>
            <person name="Somerville C.R."/>
            <person name="Copenhaver G.P."/>
            <person name="Preuss D."/>
            <person name="Nierman W.C."/>
            <person name="White O."/>
            <person name="Eisen J.A."/>
            <person name="Salzberg S.L."/>
            <person name="Fraser C.M."/>
            <person name="Venter J.C."/>
        </authorList>
    </citation>
    <scope>NUCLEOTIDE SEQUENCE [LARGE SCALE GENOMIC DNA]</scope>
    <source>
        <strain>cv. Columbia</strain>
    </source>
</reference>
<reference key="2">
    <citation type="journal article" date="2017" name="Plant J.">
        <title>Araport11: a complete reannotation of the Arabidopsis thaliana reference genome.</title>
        <authorList>
            <person name="Cheng C.Y."/>
            <person name="Krishnakumar V."/>
            <person name="Chan A.P."/>
            <person name="Thibaud-Nissen F."/>
            <person name="Schobel S."/>
            <person name="Town C.D."/>
        </authorList>
    </citation>
    <scope>GENOME REANNOTATION</scope>
    <source>
        <strain>cv. Columbia</strain>
    </source>
</reference>
<reference key="3">
    <citation type="journal article" date="2003" name="Science">
        <title>Empirical analysis of transcriptional activity in the Arabidopsis genome.</title>
        <authorList>
            <person name="Yamada K."/>
            <person name="Lim J."/>
            <person name="Dale J.M."/>
            <person name="Chen H."/>
            <person name="Shinn P."/>
            <person name="Palm C.J."/>
            <person name="Southwick A.M."/>
            <person name="Wu H.C."/>
            <person name="Kim C.J."/>
            <person name="Nguyen M."/>
            <person name="Pham P.K."/>
            <person name="Cheuk R.F."/>
            <person name="Karlin-Newmann G."/>
            <person name="Liu S.X."/>
            <person name="Lam B."/>
            <person name="Sakano H."/>
            <person name="Wu T."/>
            <person name="Yu G."/>
            <person name="Miranda M."/>
            <person name="Quach H.L."/>
            <person name="Tripp M."/>
            <person name="Chang C.H."/>
            <person name="Lee J.M."/>
            <person name="Toriumi M.J."/>
            <person name="Chan M.M."/>
            <person name="Tang C.C."/>
            <person name="Onodera C.S."/>
            <person name="Deng J.M."/>
            <person name="Akiyama K."/>
            <person name="Ansari Y."/>
            <person name="Arakawa T."/>
            <person name="Banh J."/>
            <person name="Banno F."/>
            <person name="Bowser L."/>
            <person name="Brooks S.Y."/>
            <person name="Carninci P."/>
            <person name="Chao Q."/>
            <person name="Choy N."/>
            <person name="Enju A."/>
            <person name="Goldsmith A.D."/>
            <person name="Gurjal M."/>
            <person name="Hansen N.F."/>
            <person name="Hayashizaki Y."/>
            <person name="Johnson-Hopson C."/>
            <person name="Hsuan V.W."/>
            <person name="Iida K."/>
            <person name="Karnes M."/>
            <person name="Khan S."/>
            <person name="Koesema E."/>
            <person name="Ishida J."/>
            <person name="Jiang P.X."/>
            <person name="Jones T."/>
            <person name="Kawai J."/>
            <person name="Kamiya A."/>
            <person name="Meyers C."/>
            <person name="Nakajima M."/>
            <person name="Narusaka M."/>
            <person name="Seki M."/>
            <person name="Sakurai T."/>
            <person name="Satou M."/>
            <person name="Tamse R."/>
            <person name="Vaysberg M."/>
            <person name="Wallender E.K."/>
            <person name="Wong C."/>
            <person name="Yamamura Y."/>
            <person name="Yuan S."/>
            <person name="Shinozaki K."/>
            <person name="Davis R.W."/>
            <person name="Theologis A."/>
            <person name="Ecker J.R."/>
        </authorList>
    </citation>
    <scope>NUCLEOTIDE SEQUENCE [LARGE SCALE MRNA]</scope>
    <source>
        <strain>cv. Columbia</strain>
    </source>
</reference>
<reference key="4">
    <citation type="journal article" date="2009" name="DNA Res.">
        <title>Analysis of multiple occurrences of alternative splicing events in Arabidopsis thaliana using novel sequenced full-length cDNAs.</title>
        <authorList>
            <person name="Iida K."/>
            <person name="Fukami-Kobayashi K."/>
            <person name="Toyoda A."/>
            <person name="Sakaki Y."/>
            <person name="Kobayashi M."/>
            <person name="Seki M."/>
            <person name="Shinozaki K."/>
        </authorList>
    </citation>
    <scope>NUCLEOTIDE SEQUENCE [LARGE SCALE MRNA] OF 64-305</scope>
    <source>
        <strain>cv. Columbia</strain>
        <tissue>Root</tissue>
    </source>
</reference>
<reference key="5">
    <citation type="journal article" date="2008" name="Plant Cell">
        <title>An inositolphosphorylceramide synthase is involved in regulation of plant programmed cell death associated with defense in Arabidopsis.</title>
        <authorList>
            <person name="Wang W."/>
            <person name="Yang X."/>
            <person name="Tangchaiburana S."/>
            <person name="Ndeh R."/>
            <person name="Markham J.E."/>
            <person name="Tsegaye Y."/>
            <person name="Dunn T.M."/>
            <person name="Wang G.-L."/>
            <person name="Bellizzi M."/>
            <person name="Parsons J.F."/>
            <person name="Morrissey D."/>
            <person name="Bravo J.E."/>
            <person name="Lynch D.V."/>
            <person name="Xiao S."/>
        </authorList>
    </citation>
    <scope>FUNCTION</scope>
    <scope>DISRUPTION PHENOTYPE</scope>
    <scope>CATALYTIC ACTIVITY</scope>
    <scope>PATHWAY</scope>
    <scope>TISSUE SPECIFICITY</scope>
    <scope>SUBCELLULAR LOCATION</scope>
    <scope>INDUCTION BY GOLOVINOMYCES CICHORACEARUM AND PSEUDOMONAS SYRINGAE</scope>
    <source>
        <strain>cv. Columbia</strain>
    </source>
</reference>
<reference key="6">
    <citation type="journal article" date="2010" name="Plant Mol. Biol.">
        <title>Functional analyses of differentially expressed isoforms of the Arabidopsis inositol phosphorylceramide synthase.</title>
        <authorList>
            <person name="Mina J.G."/>
            <person name="Okada Y."/>
            <person name="Wansadhipathi-Kannangara N.K."/>
            <person name="Pratt S."/>
            <person name="Shams-Eldin H."/>
            <person name="Schwarz R.T."/>
            <person name="Steel P.G."/>
            <person name="Fawcett T."/>
            <person name="Denny P.W."/>
        </authorList>
    </citation>
    <scope>FUNCTION</scope>
    <scope>TISSUE SPECIFICITY</scope>
    <scope>GENE FAMILY</scope>
    <scope>NOMENCLATURE</scope>
</reference>
<reference key="7">
    <citation type="journal article" date="2013" name="Curr. Opin. Plant Biol.">
        <title>Plant sphingolipids: function follows form.</title>
        <authorList>
            <person name="Markham J.E."/>
            <person name="Lynch D.V."/>
            <person name="Napier J.A."/>
            <person name="Dunn T.M."/>
            <person name="Cahoon E.B."/>
        </authorList>
    </citation>
    <scope>REVIEW ON SPHINGOLIPIDS</scope>
</reference>
<reference key="8">
    <citation type="journal article" date="2020" name="Trends Plant Sci.">
        <title>Synthesis and function of complex sphingolipid glycosylation.</title>
        <authorList>
            <person name="Mortimer J.C."/>
            <person name="Scheller H.V."/>
        </authorList>
    </citation>
    <scope>REVIEW</scope>
</reference>
<comment type="function">
    <text evidence="3 4">Catalyzes the transfer of the phosphorylinositol group from phosphatidylinositol (PI) to phytoceramide, an essential step in sphingolipid biosynthesis (PubMed:19001565, PubMed:20309609). May play an important role in modulating plant programmed cell death (PCD) associated with defense (e.g. toward Golovinomyces cichoracearum) by promoting sphingolipid metabolism and thus regulating ceramide accumulation (PubMed:19001565).</text>
</comment>
<comment type="catalytic activity">
    <reaction evidence="3">
        <text>an N-(2R-hydroxy-very-long-chain fatty acyl)-(R)-4-hydroxysphingoid base + a 1,2-diacyl-sn-glycero-3-phospho-(1D-myo-inositol) = a 1D-myo-inositol-1-phospho-N-[(R)-2-hydroxy-very-long-chain fatty acyl]-(R)-4-hydroxysphingoid base + a 1,2-diacyl-sn-glycerol</text>
        <dbReference type="Rhea" id="RHEA:64536"/>
        <dbReference type="ChEBI" id="CHEBI:17815"/>
        <dbReference type="ChEBI" id="CHEBI:57880"/>
        <dbReference type="ChEBI" id="CHEBI:155886"/>
        <dbReference type="ChEBI" id="CHEBI:155926"/>
        <dbReference type="EC" id="2.7.1.227"/>
    </reaction>
    <physiologicalReaction direction="left-to-right" evidence="3">
        <dbReference type="Rhea" id="RHEA:64537"/>
    </physiologicalReaction>
</comment>
<comment type="pathway">
    <text evidence="3">Sphingolipid metabolism.</text>
</comment>
<comment type="subcellular location">
    <subcellularLocation>
        <location evidence="3">Golgi apparatus</location>
        <location evidence="3">trans-Golgi network membrane</location>
        <topology evidence="3">Multi-pass membrane protein</topology>
    </subcellularLocation>
</comment>
<comment type="tissue specificity">
    <text evidence="3 4">Expressed in leaves, roots, stems, flowers and siliques.</text>
</comment>
<comment type="induction">
    <text evidence="3">By powdery mildew (e.g. Golovinomyces cichoracearum and Pseudomonas syringae) inoculation.</text>
</comment>
<comment type="disruption phenotype">
    <text evidence="3">Constitutive RPW8-mediated HR-like cell death characterized by salicylic acid (SA) accumulation, enhanced transcription of RPW8 and RPW8-dependent spontaneous HR-like cell death (SHL) in leaf tissues. Reduced plant stature. Sphingolipid (e.g. ceramides and hydroxyceramides) accumulation associated with a reduced inositol-phosphorylceramide synthase (IPCS) activity.</text>
</comment>
<comment type="similarity">
    <text evidence="7">Belongs to the sphingomyelin synthase family.</text>
</comment>
<dbReference type="EC" id="2.7.1.227" evidence="3"/>
<dbReference type="EMBL" id="CP002685">
    <property type="protein sequence ID" value="AEC09468.1"/>
    <property type="molecule type" value="Genomic_DNA"/>
</dbReference>
<dbReference type="EMBL" id="CP002685">
    <property type="protein sequence ID" value="ANM62302.1"/>
    <property type="molecule type" value="Genomic_DNA"/>
</dbReference>
<dbReference type="EMBL" id="AF325083">
    <property type="protein sequence ID" value="AAK17151.1"/>
    <property type="molecule type" value="mRNA"/>
</dbReference>
<dbReference type="EMBL" id="AY058059">
    <property type="protein sequence ID" value="AAL24167.1"/>
    <property type="molecule type" value="mRNA"/>
</dbReference>
<dbReference type="EMBL" id="AY090297">
    <property type="protein sequence ID" value="AAL90958.1"/>
    <property type="molecule type" value="mRNA"/>
</dbReference>
<dbReference type="EMBL" id="AK317636">
    <property type="protein sequence ID" value="BAH20298.1"/>
    <property type="molecule type" value="mRNA"/>
</dbReference>
<dbReference type="PIR" id="A84799">
    <property type="entry name" value="A84799"/>
</dbReference>
<dbReference type="SMR" id="Q9SH93"/>
<dbReference type="BioGRID" id="3715">
    <property type="interactions" value="13"/>
</dbReference>
<dbReference type="FunCoup" id="Q9SH93">
    <property type="interactions" value="738"/>
</dbReference>
<dbReference type="IntAct" id="Q9SH93">
    <property type="interactions" value="13"/>
</dbReference>
<dbReference type="STRING" id="3702.Q9SH93"/>
<dbReference type="iPTMnet" id="Q9SH93"/>
<dbReference type="PaxDb" id="3702-AT2G37940.1"/>
<dbReference type="ProteomicsDB" id="238949"/>
<dbReference type="EnsemblPlants" id="AT2G37940.1">
    <property type="protein sequence ID" value="AT2G37940.1"/>
    <property type="gene ID" value="AT2G37940"/>
</dbReference>
<dbReference type="EnsemblPlants" id="AT2G37940.2">
    <property type="protein sequence ID" value="AT2G37940.2"/>
    <property type="gene ID" value="AT2G37940"/>
</dbReference>
<dbReference type="GeneID" id="818371"/>
<dbReference type="Gramene" id="AT2G37940.1">
    <property type="protein sequence ID" value="AT2G37940.1"/>
    <property type="gene ID" value="AT2G37940"/>
</dbReference>
<dbReference type="Gramene" id="AT2G37940.2">
    <property type="protein sequence ID" value="AT2G37940.2"/>
    <property type="gene ID" value="AT2G37940"/>
</dbReference>
<dbReference type="KEGG" id="ath:AT2G37940"/>
<dbReference type="Araport" id="AT2G37940"/>
<dbReference type="TAIR" id="AT2G37940">
    <property type="gene designation" value="ATIPCS2"/>
</dbReference>
<dbReference type="eggNOG" id="KOG3058">
    <property type="taxonomic scope" value="Eukaryota"/>
</dbReference>
<dbReference type="HOGENOM" id="CLU_078641_1_0_1"/>
<dbReference type="InParanoid" id="Q9SH93"/>
<dbReference type="OMA" id="EWRPRTQ"/>
<dbReference type="OrthoDB" id="422827at2759"/>
<dbReference type="PhylomeDB" id="Q9SH93"/>
<dbReference type="BioCyc" id="ARA:AT2G37940-MONOMER"/>
<dbReference type="BioCyc" id="MetaCyc:AT2G37940-MONOMER"/>
<dbReference type="BRENDA" id="2.7.1.227">
    <property type="organism ID" value="399"/>
</dbReference>
<dbReference type="PRO" id="PR:Q9SH93"/>
<dbReference type="Proteomes" id="UP000006548">
    <property type="component" value="Chromosome 2"/>
</dbReference>
<dbReference type="ExpressionAtlas" id="Q9SH93">
    <property type="expression patterns" value="baseline and differential"/>
</dbReference>
<dbReference type="GO" id="GO:0016020">
    <property type="term" value="C:membrane"/>
    <property type="evidence" value="ECO:0007669"/>
    <property type="project" value="UniProtKB-KW"/>
</dbReference>
<dbReference type="GO" id="GO:0005802">
    <property type="term" value="C:trans-Golgi network"/>
    <property type="evidence" value="ECO:0000314"/>
    <property type="project" value="TAIR"/>
</dbReference>
<dbReference type="GO" id="GO:0045140">
    <property type="term" value="F:inositol phosphoceramide synthase activity"/>
    <property type="evidence" value="ECO:0000314"/>
    <property type="project" value="TAIR"/>
</dbReference>
<dbReference type="GO" id="GO:0016780">
    <property type="term" value="F:phosphotransferase activity, for other substituted phosphate groups"/>
    <property type="evidence" value="ECO:0007669"/>
    <property type="project" value="InterPro"/>
</dbReference>
<dbReference type="GO" id="GO:0006952">
    <property type="term" value="P:defense response"/>
    <property type="evidence" value="ECO:0000270"/>
    <property type="project" value="TAIR"/>
</dbReference>
<dbReference type="GO" id="GO:0030148">
    <property type="term" value="P:sphingolipid biosynthetic process"/>
    <property type="evidence" value="ECO:0000314"/>
    <property type="project" value="TAIR"/>
</dbReference>
<dbReference type="InterPro" id="IPR045221">
    <property type="entry name" value="Sphingomyelin_synth-like"/>
</dbReference>
<dbReference type="InterPro" id="IPR025749">
    <property type="entry name" value="Sphingomyelin_synth-like_dom"/>
</dbReference>
<dbReference type="PANTHER" id="PTHR21290:SF53">
    <property type="entry name" value="PHOSPHATIDYLINOSITOL:CERAMIDE INOSITOLPHOSPHOTRANSFERASE 2"/>
    <property type="match status" value="1"/>
</dbReference>
<dbReference type="PANTHER" id="PTHR21290">
    <property type="entry name" value="SPHINGOMYELIN SYNTHETASE"/>
    <property type="match status" value="1"/>
</dbReference>
<dbReference type="Pfam" id="PF14360">
    <property type="entry name" value="PAP2_C"/>
    <property type="match status" value="1"/>
</dbReference>
<accession>Q9SH93</accession>
<accession>B9DHT1</accession>
<evidence type="ECO:0000250" key="1">
    <source>
        <dbReference type="UniProtKB" id="Q86VZ5"/>
    </source>
</evidence>
<evidence type="ECO:0000255" key="2"/>
<evidence type="ECO:0000269" key="3">
    <source>
    </source>
</evidence>
<evidence type="ECO:0000269" key="4">
    <source>
    </source>
</evidence>
<evidence type="ECO:0000303" key="5">
    <source>
    </source>
</evidence>
<evidence type="ECO:0000303" key="6">
    <source>
    </source>
</evidence>
<evidence type="ECO:0000305" key="7"/>
<evidence type="ECO:0000312" key="8">
    <source>
        <dbReference type="Araport" id="AT2G37940"/>
    </source>
</evidence>